<evidence type="ECO:0000250" key="1">
    <source>
        <dbReference type="UniProtKB" id="Q8VEC3"/>
    </source>
</evidence>
<evidence type="ECO:0000255" key="2"/>
<evidence type="ECO:0000255" key="3">
    <source>
        <dbReference type="PROSITE-ProRule" id="PRU00098"/>
    </source>
</evidence>
<evidence type="ECO:0000255" key="4">
    <source>
        <dbReference type="PROSITE-ProRule" id="PRU00188"/>
    </source>
</evidence>
<evidence type="ECO:0000269" key="5">
    <source>
    </source>
</evidence>
<evidence type="ECO:0000269" key="6">
    <source>
    </source>
</evidence>
<evidence type="ECO:0000269" key="7">
    <source>
    </source>
</evidence>
<evidence type="ECO:0000269" key="8">
    <source>
    </source>
</evidence>
<evidence type="ECO:0000269" key="9">
    <source>
    </source>
</evidence>
<evidence type="ECO:0000269" key="10">
    <source>
    </source>
</evidence>
<evidence type="ECO:0000269" key="11">
    <source>
    </source>
</evidence>
<evidence type="ECO:0000303" key="12">
    <source>
    </source>
</evidence>
<evidence type="ECO:0000303" key="13">
    <source>
    </source>
</evidence>
<evidence type="ECO:0000303" key="14">
    <source>
    </source>
</evidence>
<evidence type="ECO:0000303" key="15">
    <source>
    </source>
</evidence>
<evidence type="ECO:0000303" key="16">
    <source>
    </source>
</evidence>
<evidence type="ECO:0000305" key="17"/>
<evidence type="ECO:0000305" key="18">
    <source>
    </source>
</evidence>
<evidence type="ECO:0000312" key="19">
    <source>
        <dbReference type="HGNC" id="HGNC:18990"/>
    </source>
</evidence>
<evidence type="ECO:0007744" key="20">
    <source>
        <dbReference type="PDB" id="7WU3"/>
    </source>
</evidence>
<evidence type="ECO:0007744" key="21">
    <source>
        <dbReference type="PDB" id="7WU4"/>
    </source>
</evidence>
<evidence type="ECO:0007744" key="22">
    <source>
        <dbReference type="PDB" id="7WU5"/>
    </source>
</evidence>
<evidence type="ECO:0007744" key="23">
    <source>
        <dbReference type="PDB" id="7WXU"/>
    </source>
</evidence>
<evidence type="ECO:0007744" key="24">
    <source>
        <dbReference type="PDB" id="7WXW"/>
    </source>
</evidence>
<evidence type="ECO:0007744" key="25">
    <source>
        <dbReference type="PDB" id="7WY0"/>
    </source>
</evidence>
<evidence type="ECO:0007744" key="26">
    <source>
        <dbReference type="PDB" id="7WZ7"/>
    </source>
</evidence>
<evidence type="ECO:0007744" key="27">
    <source>
        <dbReference type="PDB" id="7X2V"/>
    </source>
</evidence>
<evidence type="ECO:0007744" key="28">
    <source>
        <dbReference type="PDB" id="8G2Y"/>
    </source>
</evidence>
<evidence type="ECO:0007744" key="29">
    <source>
        <dbReference type="PDB" id="8HC0"/>
    </source>
</evidence>
<evidence type="ECO:0007829" key="30">
    <source>
        <dbReference type="PDB" id="7WU3"/>
    </source>
</evidence>
<evidence type="ECO:0007829" key="31">
    <source>
        <dbReference type="PDB" id="7WU4"/>
    </source>
</evidence>
<evidence type="ECO:0007829" key="32">
    <source>
        <dbReference type="PDB" id="7WU5"/>
    </source>
</evidence>
<evidence type="ECO:0007829" key="33">
    <source>
        <dbReference type="PDB" id="7WY0"/>
    </source>
</evidence>
<proteinExistence type="evidence at protein level"/>
<accession>Q5T601</accession>
<accession>Q5KU15</accession>
<accession>Q5T5Z9</accession>
<accession>Q5T600</accession>
<accession>Q86SM1</accession>
<accession>Q8IXE3</accession>
<accession>Q8IZF8</accession>
<accession>Q96DQ1</accession>
<accession>Q9H615</accession>
<name>AGRF1_HUMAN</name>
<keyword id="KW-0002">3D-structure</keyword>
<keyword id="KW-0025">Alternative splicing</keyword>
<keyword id="KW-1003">Cell membrane</keyword>
<keyword id="KW-1015">Disulfide bond</keyword>
<keyword id="KW-0297">G-protein coupled receptor</keyword>
<keyword id="KW-0325">Glycoprotein</keyword>
<keyword id="KW-0472">Membrane</keyword>
<keyword id="KW-1267">Proteomics identification</keyword>
<keyword id="KW-0675">Receptor</keyword>
<keyword id="KW-1185">Reference proteome</keyword>
<keyword id="KW-0964">Secreted</keyword>
<keyword id="KW-0732">Signal</keyword>
<keyword id="KW-0807">Transducer</keyword>
<keyword id="KW-0812">Transmembrane</keyword>
<keyword id="KW-1133">Transmembrane helix</keyword>
<protein>
    <recommendedName>
        <fullName evidence="15">Adhesion G-protein coupled receptor F1</fullName>
    </recommendedName>
    <alternativeName>
        <fullName evidence="14">G protein-coupled receptor 110</fullName>
    </alternativeName>
    <alternativeName>
        <fullName>G protein-coupled receptor KPG_012</fullName>
    </alternativeName>
    <component>
        <recommendedName>
            <fullName evidence="17">Adhesion G-protein coupled receptor F1, N-terminal fragment</fullName>
            <shortName evidence="17">ADGRF1 N-terminal fragment</shortName>
        </recommendedName>
    </component>
    <component>
        <recommendedName>
            <fullName evidence="17">Adhesion G-protein coupled receptor F1, C-terminal fragment</fullName>
            <shortName evidence="17">ADGRF1 C-terminal fragment</shortName>
        </recommendedName>
    </component>
</protein>
<feature type="signal peptide" evidence="2">
    <location>
        <begin position="1"/>
        <end position="19"/>
    </location>
</feature>
<feature type="chain" id="PRO_0000012891" description="Adhesion G-protein coupled receptor F1">
    <location>
        <begin position="20"/>
        <end position="910"/>
    </location>
</feature>
<feature type="chain" id="PRO_0000462383" description="Adhesion G-protein coupled receptor F1, N-terminal fragment" evidence="17">
    <location>
        <begin position="20"/>
        <end position="566"/>
    </location>
</feature>
<feature type="chain" id="PRO_0000462384" description="Adhesion G-protein coupled receptor F1, C-terminal fragment" evidence="17">
    <location>
        <begin position="567"/>
        <end position="910"/>
    </location>
</feature>
<feature type="topological domain" description="Extracellular" evidence="8 20 21 22">
    <location>
        <begin position="20"/>
        <end position="583"/>
    </location>
</feature>
<feature type="transmembrane region" description="Helical; Name=1" evidence="8 20 21 22">
    <location>
        <begin position="584"/>
        <end position="609"/>
    </location>
</feature>
<feature type="topological domain" description="Cytoplasmic" evidence="8 20 21 22">
    <location>
        <begin position="610"/>
        <end position="621"/>
    </location>
</feature>
<feature type="transmembrane region" description="Helical; Name=2" evidence="8 20 21 22">
    <location>
        <begin position="622"/>
        <end position="646"/>
    </location>
</feature>
<feature type="topological domain" description="Extracellular" evidence="8 20 21 22">
    <location>
        <begin position="647"/>
        <end position="658"/>
    </location>
</feature>
<feature type="transmembrane region" description="Helical; Name=3" evidence="8 20 21 22">
    <location>
        <begin position="659"/>
        <end position="684"/>
    </location>
</feature>
<feature type="topological domain" description="Cytoplasmic" evidence="8 20 21 22">
    <location>
        <begin position="685"/>
        <end position="696"/>
    </location>
</feature>
<feature type="transmembrane region" description="Helical; Name=4" evidence="8 20 21 22">
    <location>
        <begin position="697"/>
        <end position="719"/>
    </location>
</feature>
<feature type="topological domain" description="Extracellular" evidence="8 20 21 22">
    <location>
        <begin position="720"/>
        <end position="742"/>
    </location>
</feature>
<feature type="transmembrane region" description="Helical; Name=5" evidence="8 20 21 22">
    <location>
        <begin position="743"/>
        <end position="767"/>
    </location>
</feature>
<feature type="topological domain" description="Cytoplasmic" evidence="8 20 21 22">
    <location>
        <begin position="768"/>
        <end position="784"/>
    </location>
</feature>
<feature type="transmembrane region" description="Helical; Name=6" evidence="8 20 21 22">
    <location>
        <begin position="785"/>
        <end position="813"/>
    </location>
</feature>
<feature type="topological domain" description="Extracellular" evidence="8 20 21 22">
    <location>
        <begin position="814"/>
        <end position="816"/>
    </location>
</feature>
<feature type="transmembrane region" description="Helical; Name=7" evidence="8 20 21 22">
    <location>
        <begin position="817"/>
        <end position="842"/>
    </location>
</feature>
<feature type="topological domain" description="Cytoplasmic" evidence="8 20 21 22">
    <location>
        <begin position="843"/>
        <end position="910"/>
    </location>
</feature>
<feature type="domain" description="SEA" evidence="4">
    <location>
        <begin position="148"/>
        <end position="256"/>
    </location>
</feature>
<feature type="domain" description="GAIN-B" evidence="3">
    <location>
        <begin position="437"/>
        <end position="579"/>
    </location>
</feature>
<feature type="region of interest" description="GPS" evidence="3">
    <location>
        <begin position="534"/>
        <end position="579"/>
    </location>
</feature>
<feature type="region of interest" description="Stachel" evidence="18">
    <location>
        <begin position="568"/>
        <end position="576"/>
    </location>
</feature>
<feature type="site" description="Cleavage; by autolysis" evidence="3">
    <location>
        <begin position="566"/>
        <end position="567"/>
    </location>
</feature>
<feature type="glycosylation site" description="N-linked (GlcNAc...) asparagine" evidence="2">
    <location>
        <position position="139"/>
    </location>
</feature>
<feature type="glycosylation site" description="N-linked (GlcNAc...) asparagine" evidence="10 29">
    <location>
        <position position="168"/>
    </location>
</feature>
<feature type="glycosylation site" description="N-linked (GlcNAc...) asparagine" evidence="2">
    <location>
        <position position="205"/>
    </location>
</feature>
<feature type="glycosylation site" description="N-linked (GlcNAc...) asparagine" evidence="10 29">
    <location>
        <position position="282"/>
    </location>
</feature>
<feature type="glycosylation site" description="N-linked (GlcNAc...) asparagine" evidence="10 29">
    <location>
        <position position="310"/>
    </location>
</feature>
<feature type="glycosylation site" description="N-linked (GlcNAc...) asparagine" evidence="2">
    <location>
        <position position="317"/>
    </location>
</feature>
<feature type="glycosylation site" description="N-linked (GlcNAc...) asparagine" evidence="10 29">
    <location>
        <position position="329"/>
    </location>
</feature>
<feature type="glycosylation site" description="N-linked (GlcNAc...) asparagine" evidence="10 29">
    <location>
        <position position="354"/>
    </location>
</feature>
<feature type="glycosylation site" description="N-linked (GlcNAc...) asparagine" evidence="10 29">
    <location>
        <position position="368"/>
    </location>
</feature>
<feature type="glycosylation site" description="N-linked (GlcNAc...) asparagine" evidence="10">
    <location>
        <position position="389"/>
    </location>
</feature>
<feature type="glycosylation site" description="N-linked (GlcNAc...) asparagine" evidence="2">
    <location>
        <position position="410"/>
    </location>
</feature>
<feature type="glycosylation site" description="N-linked (GlcNAc...) asparagine" evidence="2">
    <location>
        <position position="423"/>
    </location>
</feature>
<feature type="glycosylation site" description="N-linked (GlcNAc...) asparagine" evidence="2">
    <location>
        <position position="437"/>
    </location>
</feature>
<feature type="glycosylation site" description="N-linked (GlcNAc...) asparagine" evidence="10 29">
    <location>
        <position position="455"/>
    </location>
</feature>
<feature type="glycosylation site" description="N-linked (GlcNAc...) asparagine" evidence="2">
    <location>
        <position position="512"/>
    </location>
</feature>
<feature type="glycosylation site" description="N-linked (GlcNAc...) asparagine" evidence="2">
    <location>
        <position position="528"/>
    </location>
</feature>
<feature type="glycosylation site" description="N-linked (GlcNAc...) asparagine" evidence="2">
    <location>
        <position position="553"/>
    </location>
</feature>
<feature type="glycosylation site" description="N-linked (GlcNAc...) asparagine" evidence="2">
    <location>
        <position position="736"/>
    </location>
</feature>
<feature type="glycosylation site" description="N-linked (GlcNAc...) asparagine" evidence="2">
    <location>
        <position position="739"/>
    </location>
</feature>
<feature type="disulfide bond" evidence="10 29">
    <location>
        <begin position="257"/>
        <end position="287"/>
    </location>
</feature>
<feature type="disulfide bond" evidence="10 29">
    <location>
        <begin position="275"/>
        <end position="299"/>
    </location>
</feature>
<feature type="disulfide bond" evidence="3 10 29">
    <location>
        <begin position="534"/>
        <end position="561"/>
    </location>
</feature>
<feature type="disulfide bond" evidence="3 10 29">
    <location>
        <begin position="549"/>
        <end position="563"/>
    </location>
</feature>
<feature type="disulfide bond" evidence="8 20 21 22">
    <location>
        <begin position="657"/>
        <end position="733"/>
    </location>
</feature>
<feature type="splice variant" id="VSP_039588" description="In isoform 2." evidence="12 13">
    <original>NGSIVAGYEVVGSS</original>
    <variation>MSLLSPKLECNGTI</variation>
    <location>
        <begin position="205"/>
        <end position="218"/>
    </location>
</feature>
<feature type="splice variant" id="VSP_039589" description="In isoform 2." evidence="12 13">
    <location>
        <begin position="219"/>
        <end position="910"/>
    </location>
</feature>
<feature type="sequence variant" id="VAR_055928" description="In dbSNP:rs1226475.">
    <original>I</original>
    <variation>V</variation>
    <location>
        <position position="787"/>
    </location>
</feature>
<feature type="mutagenesis site" description="No effect." evidence="10">
    <original>N</original>
    <variation>Q</variation>
    <location>
        <position position="310"/>
    </location>
</feature>
<feature type="mutagenesis site" description="Decreased expression." evidence="10">
    <original>N</original>
    <variation>S</variation>
    <location>
        <position position="389"/>
    </location>
</feature>
<feature type="mutagenesis site" description="Abolished autprocessing, impairing G protein-coupled signaling." evidence="6">
    <original>HLT</original>
    <variation>ALA</variation>
    <location>
        <begin position="565"/>
        <end position="567"/>
    </location>
</feature>
<feature type="mutagenesis site" description="Strongly decreased G protein-coupled receptor signaling." evidence="8 9 11">
    <original>F</original>
    <variation>A</variation>
    <location>
        <position position="569"/>
    </location>
</feature>
<feature type="mutagenesis site" description="Strongly decreased G protein-coupled receptor signaling." evidence="9">
    <original>S</original>
    <variation>A</variation>
    <location>
        <position position="570"/>
    </location>
</feature>
<feature type="mutagenesis site" description="Strongly decreased G protein-coupled receptor signaling." evidence="8 9 11">
    <original>L</original>
    <variation>A</variation>
    <location>
        <position position="572"/>
    </location>
</feature>
<feature type="mutagenesis site" description="Strongly decreased G protein-coupled receptor signaling." evidence="8 9 11">
    <original>M</original>
    <variation>A</variation>
    <location>
        <position position="573"/>
    </location>
</feature>
<feature type="mutagenesis site" description="Decreased G protein-coupled receptor signaling." evidence="9">
    <original>T</original>
    <variation>A</variation>
    <location>
        <position position="589"/>
    </location>
</feature>
<feature type="mutagenesis site" description="Strongly decreased G protein-coupled receptor signaling." evidence="8">
    <original>M</original>
    <variation>A</variation>
    <location>
        <position position="627"/>
    </location>
</feature>
<feature type="mutagenesis site" description="Strongly decreased G protein-coupled receptor signaling." evidence="9">
    <original>I</original>
    <variation>A</variation>
    <location>
        <position position="630"/>
    </location>
</feature>
<feature type="mutagenesis site" description="Strongly decreased G protein-coupled receptor signaling." evidence="8">
    <original>F</original>
    <variation>A</variation>
    <location>
        <position position="672"/>
    </location>
</feature>
<feature type="mutagenesis site" description="Strongly decreased G protein-coupled receptor signaling." evidence="8 9">
    <original>M</original>
    <variation>A</variation>
    <location>
        <position position="675"/>
    </location>
</feature>
<feature type="mutagenesis site" description="Strongly decreased G protein-coupled receptor signaling." evidence="8">
    <original>L</original>
    <variation>A</variation>
    <location>
        <position position="678"/>
    </location>
</feature>
<feature type="mutagenesis site" description="Retains G protein-coupled receptor activity." evidence="8">
    <original>L</original>
    <variation>A</variation>
    <variation>H</variation>
    <location>
        <position position="681"/>
    </location>
</feature>
<feature type="mutagenesis site" description="Strongly decreased G protein-coupled receptor signaling." evidence="8">
    <original>L</original>
    <variation>A</variation>
    <location>
        <position position="682"/>
    </location>
</feature>
<feature type="mutagenesis site" description="Strongly decreased G protein-coupled receptor signaling." evidence="8">
    <original>A</original>
    <variation>G</variation>
    <location>
        <position position="683"/>
    </location>
</feature>
<feature type="mutagenesis site" description="Decreased G protein-coupled receptor signaling." evidence="9">
    <original>R</original>
    <variation>A</variation>
    <location>
        <position position="729"/>
    </location>
</feature>
<feature type="mutagenesis site" description="Strongly decreased G protein-coupled receptor signaling." evidence="8">
    <original>V</original>
    <variation>A</variation>
    <location>
        <position position="755"/>
    </location>
</feature>
<feature type="mutagenesis site" description="Strongly decreased G protein-coupled receptor signaling." evidence="8">
    <original>V</original>
    <variation>A</variation>
    <location>
        <position position="761"/>
    </location>
</feature>
<feature type="mutagenesis site" description="Strongly decreased G protein-coupled receptor signaling." evidence="8">
    <original>L</original>
    <variation>A</variation>
    <location>
        <position position="764"/>
    </location>
</feature>
<feature type="mutagenesis site" description="Strongly decreased G protein-coupled receptor signaling." evidence="8">
    <original>V</original>
    <variation>A</variation>
    <location>
        <position position="765"/>
    </location>
</feature>
<feature type="mutagenesis site" description="Strongly decreased G protein-coupled receptor signaling." evidence="8">
    <original>P</original>
    <variation>A</variation>
    <location>
        <position position="798"/>
    </location>
</feature>
<feature type="mutagenesis site" description="Strongly decreased G protein-coupled receptor signaling." evidence="8 9">
    <original>L</original>
    <variation>A</variation>
    <location>
        <position position="799"/>
    </location>
</feature>
<feature type="mutagenesis site" description="Strongly decreased G protein-coupled receptor signaling." evidence="8 9">
    <original>L</original>
    <variation>A</variation>
    <location>
        <position position="800"/>
    </location>
</feature>
<feature type="mutagenesis site" description="Strongly decreased G protein-coupled receptor signaling." evidence="8">
    <original>G</original>
    <variation>A</variation>
    <location>
        <position position="801"/>
    </location>
</feature>
<feature type="mutagenesis site" description="Strongly decreased G protein-coupled receptor signaling." evidence="8">
    <original>W</original>
    <variation>A</variation>
    <location>
        <position position="804"/>
    </location>
</feature>
<feature type="mutagenesis site" description="Strongly decreased G protein-coupled receptor signaling." evidence="9">
    <original>H</original>
    <variation>A</variation>
    <location>
        <position position="820"/>
    </location>
</feature>
<feature type="mutagenesis site" description="Strongly decreased G protein-coupled receptor signaling." evidence="8">
    <original>Q</original>
    <variation>A</variation>
    <location>
        <position position="830"/>
    </location>
</feature>
<feature type="mutagenesis site" description="Strongly decreased G protein-coupled receptor signaling." evidence="8">
    <original>G</original>
    <variation>A</variation>
    <location>
        <position position="831"/>
    </location>
</feature>
<feature type="mutagenesis site" description="Strongly decreased G protein-coupled receptor signaling." evidence="9">
    <original>I</original>
    <variation>A</variation>
    <location>
        <position position="834"/>
    </location>
</feature>
<feature type="sequence conflict" description="In Ref. 4; CAI13874." evidence="17" ref="4">
    <original>G</original>
    <variation>GV</variation>
    <location>
        <position position="23"/>
    </location>
</feature>
<feature type="sequence conflict" description="In Ref. 3; BAB15452." evidence="17" ref="3">
    <original>G</original>
    <variation>D</variation>
    <location>
        <position position="27"/>
    </location>
</feature>
<feature type="sequence conflict" description="In Ref. 7; AAN46666." evidence="17" ref="7">
    <original>VQVTQF</original>
    <variation>MDISIQ</variation>
    <location>
        <begin position="198"/>
        <end position="203"/>
    </location>
</feature>
<feature type="sequence conflict" description="In Ref. 3; BAB70874." evidence="17" ref="3">
    <original>I</original>
    <variation>A</variation>
    <location>
        <position position="614"/>
    </location>
</feature>
<feature type="helix" evidence="33">
    <location>
        <begin position="569"/>
        <end position="572"/>
    </location>
</feature>
<feature type="turn" evidence="33">
    <location>
        <begin position="579"/>
        <end position="581"/>
    </location>
</feature>
<feature type="helix" evidence="33">
    <location>
        <begin position="582"/>
        <end position="609"/>
    </location>
</feature>
<feature type="helix" evidence="33">
    <location>
        <begin position="611"/>
        <end position="613"/>
    </location>
</feature>
<feature type="helix" evidence="33">
    <location>
        <begin position="618"/>
        <end position="646"/>
    </location>
</feature>
<feature type="turn" evidence="33">
    <location>
        <begin position="649"/>
        <end position="651"/>
    </location>
</feature>
<feature type="strand" evidence="33">
    <location>
        <begin position="653"/>
        <end position="655"/>
    </location>
</feature>
<feature type="turn" evidence="33">
    <location>
        <begin position="656"/>
        <end position="658"/>
    </location>
</feature>
<feature type="helix" evidence="33">
    <location>
        <begin position="659"/>
        <end position="686"/>
    </location>
</feature>
<feature type="helix" evidence="33">
    <location>
        <begin position="695"/>
        <end position="706"/>
    </location>
</feature>
<feature type="helix" evidence="33">
    <location>
        <begin position="708"/>
        <end position="721"/>
    </location>
</feature>
<feature type="helix" evidence="33">
    <location>
        <begin position="722"/>
        <end position="724"/>
    </location>
</feature>
<feature type="strand" evidence="31">
    <location>
        <begin position="727"/>
        <end position="729"/>
    </location>
</feature>
<feature type="strand" evidence="33">
    <location>
        <begin position="730"/>
        <end position="734"/>
    </location>
</feature>
<feature type="strand" evidence="33">
    <location>
        <begin position="738"/>
        <end position="740"/>
    </location>
</feature>
<feature type="helix" evidence="33">
    <location>
        <begin position="743"/>
        <end position="746"/>
    </location>
</feature>
<feature type="helix" evidence="33">
    <location>
        <begin position="748"/>
        <end position="769"/>
    </location>
</feature>
<feature type="strand" evidence="30">
    <location>
        <begin position="774"/>
        <end position="777"/>
    </location>
</feature>
<feature type="strand" evidence="32">
    <location>
        <begin position="781"/>
        <end position="783"/>
    </location>
</feature>
<feature type="helix" evidence="33">
    <location>
        <begin position="785"/>
        <end position="799"/>
    </location>
</feature>
<feature type="helix" evidence="33">
    <location>
        <begin position="803"/>
        <end position="806"/>
    </location>
</feature>
<feature type="helix" evidence="33">
    <location>
        <begin position="807"/>
        <end position="812"/>
    </location>
</feature>
<feature type="turn" evidence="33">
    <location>
        <begin position="816"/>
        <end position="818"/>
    </location>
</feature>
<feature type="helix" evidence="33">
    <location>
        <begin position="820"/>
        <end position="827"/>
    </location>
</feature>
<feature type="helix" evidence="33">
    <location>
        <begin position="830"/>
        <end position="837"/>
    </location>
</feature>
<feature type="turn" evidence="33">
    <location>
        <begin position="838"/>
        <end position="841"/>
    </location>
</feature>
<feature type="helix" evidence="33">
    <location>
        <begin position="843"/>
        <end position="853"/>
    </location>
</feature>
<gene>
    <name evidence="16 19" type="primary">ADGRF1</name>
    <name evidence="14" type="synonym">GPR110</name>
    <name type="synonym">PGR19</name>
</gene>
<sequence length="910" mass="101365">MKVGVLWLISFFTFTDGHGGFLGKNDGIKTKKELIVNKKKHLGPVEEYQLLLQVTYRDSKEKRDLRNFLKLLKPPLLWSHGLIRIIRAKATTDCNSLNGVLQCTCEDSYTWFPPSCLDPQNCYLHTAGALPSCECHLNNLSQSVNFCERTKIWGTFKINERFTNDLLNSSSAIYSKYANGIEIQLKKAYERIQGFESVQVTQFRNGSIVAGYEVVGSSSASELLSAIEHVAEKAKTALHKLFPLEDGSFRVFGKAQCNDIVFGFGSKDDEYTLPCSSGYRGNITAKCESSGWQVIRETCVLSLLEELNKNFSMIVGNATEAAVSSFVQNLSVIIRQNPSTTVGNLASVVSILSNISSLSLASHFRVSNSTMEDVISIADNILNSASVTNWTVLLREEKYASSRLLETLENISTLVPPTALPLNFSRKFIDWKGIPVNKSQLKRGYSYQIKMCPQNTSIPIRGRVLIGSDQFQRSLPETIISMASLTLGNILPVSKNGNAQVNGPVISTVIQNYSINEVFLFFSKIESNLSQPHCVFWDFSHLQWNDAGCHLVNETQDIVTCQCTHLTSFSILMSPFVPSTIFPVVKWITYVGLGISIGSLILCLIIEALFWKQIKKSQTSHTRRICMVNIALSLLIADVWFIVGATVDTTVNPSGVCTAAVFFTHFFYLSLFFWMLMLGILLAYRIILVFHHMAQHLMMAVGFCLGYGCPLIISVITIAVTQPSNTYKRKDVCWLNWSNGSKPLLAFVVPALAIVAVNFVVVLLVLTKLWRPTVGERLSRDDKATIIRVGKSLLILTPLLGLTWGFGIGTIVDSQNLAWHVIFALLNAFQGFFILCFGILLDSKLRQLLFNKLSALSSWKQTEKQNSSDLSAKPKFSKPFNPLQNKGHYAFSHTGDSSDNIMLTQFVSNE</sequence>
<dbReference type="EMBL" id="AB065679">
    <property type="protein sequence ID" value="BAC45260.1"/>
    <property type="status" value="ALT_SEQ"/>
    <property type="molecule type" value="Genomic_DNA"/>
</dbReference>
<dbReference type="EMBL" id="AB045123">
    <property type="protein sequence ID" value="BAD83599.1"/>
    <property type="molecule type" value="mRNA"/>
</dbReference>
<dbReference type="EMBL" id="AK026337">
    <property type="protein sequence ID" value="BAB15452.1"/>
    <property type="molecule type" value="mRNA"/>
</dbReference>
<dbReference type="EMBL" id="AK055208">
    <property type="protein sequence ID" value="BAB70874.1"/>
    <property type="status" value="ALT_SEQ"/>
    <property type="molecule type" value="mRNA"/>
</dbReference>
<dbReference type="EMBL" id="AL355518">
    <property type="protein sequence ID" value="CAI13873.1"/>
    <property type="status" value="ALT_SEQ"/>
    <property type="molecule type" value="Genomic_DNA"/>
</dbReference>
<dbReference type="EMBL" id="AL355518">
    <property type="protein sequence ID" value="CAI13874.1"/>
    <property type="molecule type" value="Genomic_DNA"/>
</dbReference>
<dbReference type="EMBL" id="AL355518">
    <property type="protein sequence ID" value="CAI13875.1"/>
    <property type="molecule type" value="Genomic_DNA"/>
</dbReference>
<dbReference type="EMBL" id="CH471081">
    <property type="protein sequence ID" value="EAX04311.1"/>
    <property type="molecule type" value="Genomic_DNA"/>
</dbReference>
<dbReference type="EMBL" id="BC113634">
    <property type="protein sequence ID" value="AAI13635.1"/>
    <property type="molecule type" value="mRNA"/>
</dbReference>
<dbReference type="EMBL" id="BC113636">
    <property type="protein sequence ID" value="AAI13637.1"/>
    <property type="molecule type" value="mRNA"/>
</dbReference>
<dbReference type="EMBL" id="AY140952">
    <property type="protein sequence ID" value="AAN46666.1"/>
    <property type="molecule type" value="mRNA"/>
</dbReference>
<dbReference type="EMBL" id="AY255595">
    <property type="protein sequence ID" value="AAO85107.1"/>
    <property type="molecule type" value="mRNA"/>
</dbReference>
<dbReference type="CCDS" id="CCDS34471.1">
    <molecule id="Q5T601-1"/>
</dbReference>
<dbReference type="CCDS" id="CCDS4920.1">
    <molecule id="Q5T601-2"/>
</dbReference>
<dbReference type="RefSeq" id="NP_079324.2">
    <molecule id="Q5T601-2"/>
    <property type="nucleotide sequence ID" value="NM_025048.4"/>
</dbReference>
<dbReference type="RefSeq" id="NP_722582.2">
    <molecule id="Q5T601-1"/>
    <property type="nucleotide sequence ID" value="NM_153840.4"/>
</dbReference>
<dbReference type="PDB" id="7WU3">
    <property type="method" value="EM"/>
    <property type="resolution" value="3.10 A"/>
    <property type="chains" value="R=251-860"/>
</dbReference>
<dbReference type="PDB" id="7WU4">
    <property type="method" value="EM"/>
    <property type="resolution" value="3.40 A"/>
    <property type="chains" value="R=251-860"/>
</dbReference>
<dbReference type="PDB" id="7WU5">
    <property type="method" value="EM"/>
    <property type="resolution" value="3.00 A"/>
    <property type="chains" value="R=251-860"/>
</dbReference>
<dbReference type="PDB" id="7WXU">
    <property type="method" value="EM"/>
    <property type="resolution" value="2.85 A"/>
    <property type="chains" value="R=1-910"/>
</dbReference>
<dbReference type="PDB" id="7WXW">
    <property type="method" value="EM"/>
    <property type="resolution" value="2.84 A"/>
    <property type="chains" value="R=1-910"/>
</dbReference>
<dbReference type="PDB" id="7WY0">
    <property type="method" value="EM"/>
    <property type="resolution" value="2.83 A"/>
    <property type="chains" value="R=1-910"/>
</dbReference>
<dbReference type="PDB" id="7WZ7">
    <property type="method" value="EM"/>
    <property type="resolution" value="2.83 A"/>
    <property type="chains" value="R=1-910"/>
</dbReference>
<dbReference type="PDB" id="7X2V">
    <property type="method" value="EM"/>
    <property type="resolution" value="3.09 A"/>
    <property type="chains" value="R=1-910"/>
</dbReference>
<dbReference type="PDB" id="8G2Y">
    <property type="method" value="EM"/>
    <property type="resolution" value="3.44 A"/>
    <property type="chains" value="R=567-910"/>
</dbReference>
<dbReference type="PDB" id="8HC0">
    <property type="method" value="X-ray"/>
    <property type="resolution" value="2.90 A"/>
    <property type="chains" value="A=207-566, B=150-206, C=567-580"/>
</dbReference>
<dbReference type="PDBsum" id="7WU3"/>
<dbReference type="PDBsum" id="7WU4"/>
<dbReference type="PDBsum" id="7WU5"/>
<dbReference type="PDBsum" id="7WXU"/>
<dbReference type="PDBsum" id="7WXW"/>
<dbReference type="PDBsum" id="7WY0"/>
<dbReference type="PDBsum" id="7WZ7"/>
<dbReference type="PDBsum" id="7X2V"/>
<dbReference type="PDBsum" id="8G2Y"/>
<dbReference type="PDBsum" id="8HC0"/>
<dbReference type="EMDB" id="EMD-32818"/>
<dbReference type="EMDB" id="EMD-32819"/>
<dbReference type="EMDB" id="EMD-32820"/>
<dbReference type="EMDB" id="EMD-32881"/>
<dbReference type="EMDB" id="EMD-32882"/>
<dbReference type="EMDB" id="EMD-32883"/>
<dbReference type="EMDB" id="EMD-32905"/>
<dbReference type="EMDB" id="EMD-32972"/>
<dbReference type="SMR" id="Q5T601"/>
<dbReference type="BioGRID" id="129353">
    <property type="interactions" value="100"/>
</dbReference>
<dbReference type="FunCoup" id="Q5T601">
    <property type="interactions" value="125"/>
</dbReference>
<dbReference type="IntAct" id="Q5T601">
    <property type="interactions" value="30"/>
</dbReference>
<dbReference type="MINT" id="Q5T601"/>
<dbReference type="STRING" id="9606.ENSP00000360299"/>
<dbReference type="ChEMBL" id="CHEMBL4523872"/>
<dbReference type="MEROPS" id="P02.022"/>
<dbReference type="MEROPS" id="P02.026"/>
<dbReference type="GlyCosmos" id="Q5T601">
    <property type="glycosylation" value="19 sites, No reported glycans"/>
</dbReference>
<dbReference type="GlyGen" id="Q5T601">
    <property type="glycosylation" value="19 sites, 9 N-linked glycans (4 sites)"/>
</dbReference>
<dbReference type="iPTMnet" id="Q5T601"/>
<dbReference type="PhosphoSitePlus" id="Q5T601"/>
<dbReference type="BioMuta" id="ADGRF1"/>
<dbReference type="DMDM" id="302393689"/>
<dbReference type="jPOST" id="Q5T601"/>
<dbReference type="MassIVE" id="Q5T601"/>
<dbReference type="PaxDb" id="9606-ENSP00000360299"/>
<dbReference type="PeptideAtlas" id="Q5T601"/>
<dbReference type="ProteomicsDB" id="64561">
    <molecule id="Q5T601-1"/>
</dbReference>
<dbReference type="ProteomicsDB" id="64562">
    <molecule id="Q5T601-2"/>
</dbReference>
<dbReference type="Antibodypedia" id="30773">
    <property type="antibodies" value="187 antibodies from 27 providers"/>
</dbReference>
<dbReference type="DNASU" id="266977"/>
<dbReference type="Ensembl" id="ENST00000371243.2">
    <molecule id="Q5T601-2"/>
    <property type="protein sequence ID" value="ENSP00000360289.2"/>
    <property type="gene ID" value="ENSG00000153292.16"/>
</dbReference>
<dbReference type="Ensembl" id="ENST00000371253.7">
    <molecule id="Q5T601-1"/>
    <property type="protein sequence ID" value="ENSP00000360299.2"/>
    <property type="gene ID" value="ENSG00000153292.16"/>
</dbReference>
<dbReference type="GeneID" id="266977"/>
<dbReference type="KEGG" id="hsa:266977"/>
<dbReference type="MANE-Select" id="ENST00000371253.7">
    <property type="protein sequence ID" value="ENSP00000360299.2"/>
    <property type="RefSeq nucleotide sequence ID" value="NM_153840.4"/>
    <property type="RefSeq protein sequence ID" value="NP_722582.2"/>
</dbReference>
<dbReference type="UCSC" id="uc003oyt.4">
    <molecule id="Q5T601-1"/>
    <property type="organism name" value="human"/>
</dbReference>
<dbReference type="AGR" id="HGNC:18990"/>
<dbReference type="CTD" id="266977"/>
<dbReference type="DisGeNET" id="266977"/>
<dbReference type="GeneCards" id="ADGRF1"/>
<dbReference type="HGNC" id="HGNC:18990">
    <property type="gene designation" value="ADGRF1"/>
</dbReference>
<dbReference type="HPA" id="ENSG00000153292">
    <property type="expression patterns" value="Group enriched (esophagus, kidney, urinary bladder)"/>
</dbReference>
<dbReference type="MIM" id="617430">
    <property type="type" value="gene"/>
</dbReference>
<dbReference type="neXtProt" id="NX_Q5T601"/>
<dbReference type="OpenTargets" id="ENSG00000153292"/>
<dbReference type="PharmGKB" id="PA128394769"/>
<dbReference type="VEuPathDB" id="HostDB:ENSG00000153292"/>
<dbReference type="eggNOG" id="KOG4193">
    <property type="taxonomic scope" value="Eukaryota"/>
</dbReference>
<dbReference type="GeneTree" id="ENSGT00940000161228"/>
<dbReference type="InParanoid" id="Q5T601"/>
<dbReference type="OMA" id="TQFLSTE"/>
<dbReference type="OrthoDB" id="10040049at2759"/>
<dbReference type="PAN-GO" id="Q5T601">
    <property type="GO annotations" value="5 GO annotations based on evolutionary models"/>
</dbReference>
<dbReference type="PhylomeDB" id="Q5T601"/>
<dbReference type="TreeFam" id="TF316380"/>
<dbReference type="PathwayCommons" id="Q5T601"/>
<dbReference type="BioGRID-ORCS" id="266977">
    <property type="hits" value="10 hits in 1147 CRISPR screens"/>
</dbReference>
<dbReference type="ChiTaRS" id="ADGRF1">
    <property type="organism name" value="human"/>
</dbReference>
<dbReference type="GeneWiki" id="GPR110"/>
<dbReference type="GenomeRNAi" id="266977"/>
<dbReference type="Pharos" id="Q5T601">
    <property type="development level" value="Tbio"/>
</dbReference>
<dbReference type="PRO" id="PR:Q5T601"/>
<dbReference type="Proteomes" id="UP000005640">
    <property type="component" value="Chromosome 6"/>
</dbReference>
<dbReference type="RNAct" id="Q5T601">
    <property type="molecule type" value="protein"/>
</dbReference>
<dbReference type="Bgee" id="ENSG00000153292">
    <property type="expression patterns" value="Expressed in palpebral conjunctiva and 97 other cell types or tissues"/>
</dbReference>
<dbReference type="ExpressionAtlas" id="Q5T601">
    <property type="expression patterns" value="baseline and differential"/>
</dbReference>
<dbReference type="GO" id="GO:0031410">
    <property type="term" value="C:cytoplasmic vesicle"/>
    <property type="evidence" value="ECO:0000318"/>
    <property type="project" value="GO_Central"/>
</dbReference>
<dbReference type="GO" id="GO:0005576">
    <property type="term" value="C:extracellular region"/>
    <property type="evidence" value="ECO:0007669"/>
    <property type="project" value="UniProtKB-SubCell"/>
</dbReference>
<dbReference type="GO" id="GO:0016020">
    <property type="term" value="C:membrane"/>
    <property type="evidence" value="ECO:0000304"/>
    <property type="project" value="GDB"/>
</dbReference>
<dbReference type="GO" id="GO:0005886">
    <property type="term" value="C:plasma membrane"/>
    <property type="evidence" value="ECO:0000314"/>
    <property type="project" value="UniProtKB"/>
</dbReference>
<dbReference type="GO" id="GO:0004930">
    <property type="term" value="F:G protein-coupled receptor activity"/>
    <property type="evidence" value="ECO:0000314"/>
    <property type="project" value="UniProtKB"/>
</dbReference>
<dbReference type="GO" id="GO:0007189">
    <property type="term" value="P:adenylate cyclase-activating G protein-coupled receptor signaling pathway"/>
    <property type="evidence" value="ECO:0000314"/>
    <property type="project" value="UniProtKB"/>
</dbReference>
<dbReference type="GO" id="GO:0007166">
    <property type="term" value="P:cell surface receptor signaling pathway"/>
    <property type="evidence" value="ECO:0007669"/>
    <property type="project" value="InterPro"/>
</dbReference>
<dbReference type="GO" id="GO:0006112">
    <property type="term" value="P:energy reserve metabolic process"/>
    <property type="evidence" value="ECO:0000318"/>
    <property type="project" value="GO_Central"/>
</dbReference>
<dbReference type="GO" id="GO:0045444">
    <property type="term" value="P:fat cell differentiation"/>
    <property type="evidence" value="ECO:0000318"/>
    <property type="project" value="GO_Central"/>
</dbReference>
<dbReference type="GO" id="GO:0007186">
    <property type="term" value="P:G protein-coupled receptor signaling pathway"/>
    <property type="evidence" value="ECO:0000304"/>
    <property type="project" value="GDB"/>
</dbReference>
<dbReference type="GO" id="GO:0007613">
    <property type="term" value="P:memory"/>
    <property type="evidence" value="ECO:0007669"/>
    <property type="project" value="Ensembl"/>
</dbReference>
<dbReference type="GO" id="GO:0031175">
    <property type="term" value="P:neuron projection development"/>
    <property type="evidence" value="ECO:0000318"/>
    <property type="project" value="GO_Central"/>
</dbReference>
<dbReference type="GO" id="GO:0019216">
    <property type="term" value="P:regulation of lipid metabolic process"/>
    <property type="evidence" value="ECO:0000318"/>
    <property type="project" value="GO_Central"/>
</dbReference>
<dbReference type="GO" id="GO:0007416">
    <property type="term" value="P:synapse assembly"/>
    <property type="evidence" value="ECO:0000318"/>
    <property type="project" value="GO_Central"/>
</dbReference>
<dbReference type="CDD" id="cd15932">
    <property type="entry name" value="7tmB2_GPR116-like_Adhesion_VI"/>
    <property type="match status" value="1"/>
</dbReference>
<dbReference type="FunFam" id="2.60.220.50:FF:000015">
    <property type="entry name" value="Adhesion G protein-coupled receptor F4"/>
    <property type="match status" value="1"/>
</dbReference>
<dbReference type="FunFam" id="1.20.1070.10:FF:000058">
    <property type="entry name" value="Adhesion G protein-coupled receptor F5"/>
    <property type="match status" value="1"/>
</dbReference>
<dbReference type="Gene3D" id="1.25.40.610">
    <property type="match status" value="1"/>
</dbReference>
<dbReference type="Gene3D" id="2.60.220.50">
    <property type="match status" value="1"/>
</dbReference>
<dbReference type="Gene3D" id="1.20.1070.10">
    <property type="entry name" value="Rhodopsin 7-helix transmembrane proteins"/>
    <property type="match status" value="1"/>
</dbReference>
<dbReference type="InterPro" id="IPR051587">
    <property type="entry name" value="Adhesion_GPCR"/>
</dbReference>
<dbReference type="InterPro" id="IPR057244">
    <property type="entry name" value="GAIN_B"/>
</dbReference>
<dbReference type="InterPro" id="IPR046338">
    <property type="entry name" value="GAIN_dom_sf"/>
</dbReference>
<dbReference type="InterPro" id="IPR017981">
    <property type="entry name" value="GPCR_2-like_7TM"/>
</dbReference>
<dbReference type="InterPro" id="IPR008078">
    <property type="entry name" value="GPCR_2_Ig-hepta-like_rcpt"/>
</dbReference>
<dbReference type="InterPro" id="IPR000832">
    <property type="entry name" value="GPCR_2_secretin-like"/>
</dbReference>
<dbReference type="InterPro" id="IPR000203">
    <property type="entry name" value="GPS"/>
</dbReference>
<dbReference type="InterPro" id="IPR000082">
    <property type="entry name" value="SEA_dom"/>
</dbReference>
<dbReference type="PANTHER" id="PTHR45813:SF3">
    <property type="entry name" value="ADHESION G-PROTEIN COUPLED RECEPTOR F1"/>
    <property type="match status" value="1"/>
</dbReference>
<dbReference type="PANTHER" id="PTHR45813">
    <property type="entry name" value="IG-LIKE DOMAIN-CONTAINING PROTEIN"/>
    <property type="match status" value="1"/>
</dbReference>
<dbReference type="Pfam" id="PF00002">
    <property type="entry name" value="7tm_2"/>
    <property type="match status" value="1"/>
</dbReference>
<dbReference type="Pfam" id="PF01825">
    <property type="entry name" value="GPS"/>
    <property type="match status" value="1"/>
</dbReference>
<dbReference type="Pfam" id="PF01390">
    <property type="entry name" value="SEA"/>
    <property type="match status" value="1"/>
</dbReference>
<dbReference type="PRINTS" id="PR00249">
    <property type="entry name" value="GPCRSECRETIN"/>
</dbReference>
<dbReference type="PRINTS" id="PR01695">
    <property type="entry name" value="IGHEPTARCPTR"/>
</dbReference>
<dbReference type="SMART" id="SM00303">
    <property type="entry name" value="GPS"/>
    <property type="match status" value="1"/>
</dbReference>
<dbReference type="PROSITE" id="PS50261">
    <property type="entry name" value="G_PROTEIN_RECEP_F2_4"/>
    <property type="match status" value="1"/>
</dbReference>
<dbReference type="PROSITE" id="PS50221">
    <property type="entry name" value="GAIN_B"/>
    <property type="match status" value="1"/>
</dbReference>
<dbReference type="PROSITE" id="PS50024">
    <property type="entry name" value="SEA"/>
    <property type="match status" value="1"/>
</dbReference>
<comment type="function">
    <text evidence="1 6 7 8 9 11">Adhesion G-protein coupled receptor (aGPCR) for N-docosahexaenoylethanolamine (synaptamide), an omega-3 fatty acid lipid highly enriched in the brain (PubMed:27759003, PubMed:32144388). Ligand binding causes a conformation change that triggers signaling via guanine nucleotide-binding proteins (G proteins) and modulates the activity of downstream effectors, such as adenylate cyclase (PubMed:35418679, PubMed:36127364, PubMed:37120430). ADGRF1 is coupled to G(s) G proteins and mediates activation of adenylate cyclase activity (PubMed:35418679). Also able to couple to G(q), G(i) and G(12)/G(13) G proteins; additional evidence is however required to confirm this result in vivo (PubMed:36127364, PubMed:37120430). Involved in the development of neurons and cognitive function (By similarity). In liver, involved in fat accumulation (By similarity).</text>
</comment>
<comment type="activity regulation">
    <text evidence="3 8">Forms a heterodimer of 2 chains generated by proteolytic processing that remain associated through non-covalent interactions mediated by the GAIN-B domain (By similarity). In the inactivated receptor, the Stachel sequence (also named stalk) is embedded in the GAIN-B domain, where it adopts a beta-strand conformation (PubMed:35418679). On activation, the Stachel moves into the 7 transmembrane region and adopts a twisted hook-shaped configuration that forms contacts within the receptor, leading to coupling of a G-alpha protein, which activates signaling (PubMed:35418679). The cleaved GAIN-B and N-terminal domains can then dissociate from the rest of the receptor (PubMed:35418679).</text>
</comment>
<comment type="subunit">
    <text evidence="3">Heterodimer of 2 chains generated by proteolytic processing; the large extracellular N-terminal fragment and the membrane-bound C-terminal fragment predominantly remain associated and non-covalently linked.</text>
</comment>
<comment type="interaction">
    <interactant intactId="EBI-46447105">
        <id>Q5T601</id>
    </interactant>
    <interactant intactId="EBI-3909604">
        <id>P50148</id>
        <label>GNAQ</label>
    </interactant>
    <organismsDiffer>false</organismsDiffer>
    <experiments>2</experiments>
</comment>
<comment type="interaction">
    <interactant intactId="EBI-46447105">
        <id>Q5T601</id>
    </interactant>
    <interactant intactId="EBI-4400880">
        <id>Q5JWF2</id>
        <label>GNAS</label>
    </interactant>
    <organismsDiffer>false</organismsDiffer>
    <experiments>2</experiments>
</comment>
<comment type="subcellular location">
    <subcellularLocation>
        <location evidence="5 6">Cell membrane</location>
        <topology evidence="8">Multi-pass membrane protein</topology>
    </subcellularLocation>
</comment>
<comment type="subcellular location">
    <molecule>Isoform 2</molecule>
    <subcellularLocation>
        <location evidence="5">Secreted</location>
    </subcellularLocation>
</comment>
<comment type="alternative products">
    <event type="alternative splicing"/>
    <isoform>
        <id>Q5T601-1</id>
        <name>1</name>
        <sequence type="displayed"/>
    </isoform>
    <isoform>
        <id>Q5T601-2</id>
        <name>2</name>
        <sequence type="described" ref="VSP_039588 VSP_039589"/>
    </isoform>
</comment>
<comment type="tissue specificity">
    <text evidence="5">Mainly expressed in the kidney. Up-regulated in lung adenocarcinomas and prostate cancers.</text>
</comment>
<comment type="domain">
    <text evidence="8">The Stachel sequence (also named stalk) in the C-terminal part of the extracellular domain (ECD) functions as a tethered agonist (PubMed:35418679). In the inactivated receptor, the Stachel sequence (also named stalk) is embedded in the GAIN-B domain, where it adopts a beta-strand conformation (PubMed:35418679). On activation, the Stachel moves into the 7 transmembrane region and adopts a twisted hook-shaped configuration that forms contacts within the receptor, leading to coupling of a G-alpha protein, which activates signaling (PubMed:35418679).</text>
</comment>
<comment type="PTM">
    <text evidence="3">Autoproteolytically processed at the GPS region of the GAIN-B domain; this cleavage modulates receptor activity.</text>
</comment>
<comment type="PTM">
    <text evidence="5 10">Glycosylated (PubMed:20149256). Glycosylation at Asn-389 is required for secretion or folding (PubMed:36716818).</text>
</comment>
<comment type="similarity">
    <text evidence="17">Belongs to the G-protein coupled receptor 2 family. Adhesion G-protein coupled receptor (ADGR) subfamily.</text>
</comment>
<comment type="sequence caution" evidence="17">
    <conflict type="erroneous initiation">
        <sequence resource="EMBL-CDS" id="BAB70874"/>
    </conflict>
    <text>Truncated N-terminus.</text>
</comment>
<comment type="sequence caution" evidence="17">
    <conflict type="miscellaneous discrepancy">
        <sequence resource="EMBL-CDS" id="BAB70874"/>
    </conflict>
    <text>Probable cloning artifact.</text>
</comment>
<comment type="sequence caution" evidence="17">
    <conflict type="erroneous gene model prediction">
        <sequence resource="EMBL-CDS" id="BAC45260"/>
    </conflict>
</comment>
<comment type="sequence caution" evidence="17">
    <conflict type="erroneous gene model prediction">
        <sequence resource="EMBL-CDS" id="CAI13873"/>
    </conflict>
</comment>
<organism>
    <name type="scientific">Homo sapiens</name>
    <name type="common">Human</name>
    <dbReference type="NCBI Taxonomy" id="9606"/>
    <lineage>
        <taxon>Eukaryota</taxon>
        <taxon>Metazoa</taxon>
        <taxon>Chordata</taxon>
        <taxon>Craniata</taxon>
        <taxon>Vertebrata</taxon>
        <taxon>Euteleostomi</taxon>
        <taxon>Mammalia</taxon>
        <taxon>Eutheria</taxon>
        <taxon>Euarchontoglires</taxon>
        <taxon>Primates</taxon>
        <taxon>Haplorrhini</taxon>
        <taxon>Catarrhini</taxon>
        <taxon>Hominidae</taxon>
        <taxon>Homo</taxon>
    </lineage>
</organism>
<reference key="1">
    <citation type="submission" date="2001-07" db="EMBL/GenBank/DDBJ databases">
        <title>Genome-wide discovery and analysis of human seven transmembrane helix receptor genes.</title>
        <authorList>
            <person name="Suwa M."/>
            <person name="Sato T."/>
            <person name="Okouchi I."/>
            <person name="Arita M."/>
            <person name="Futami K."/>
            <person name="Matsumoto S."/>
            <person name="Tsutsumi S."/>
            <person name="Aburatani H."/>
            <person name="Asai K."/>
            <person name="Akiyama Y."/>
        </authorList>
    </citation>
    <scope>NUCLEOTIDE SEQUENCE [GENOMIC DNA]</scope>
</reference>
<reference key="2">
    <citation type="submission" date="2000-06" db="EMBL/GenBank/DDBJ databases">
        <title>Probable G-protein coupled receptor KPG_012.</title>
        <authorList>
            <person name="Okazaki H."/>
            <person name="Inoue S."/>
            <person name="Yoshida S."/>
            <person name="Urakawa I."/>
            <person name="Mizutani S."/>
        </authorList>
    </citation>
    <scope>NUCLEOTIDE SEQUENCE [MRNA] (ISOFORM 1)</scope>
</reference>
<reference key="3">
    <citation type="journal article" date="2004" name="Nat. Genet.">
        <title>Complete sequencing and characterization of 21,243 full-length human cDNAs.</title>
        <authorList>
            <person name="Ota T."/>
            <person name="Suzuki Y."/>
            <person name="Nishikawa T."/>
            <person name="Otsuki T."/>
            <person name="Sugiyama T."/>
            <person name="Irie R."/>
            <person name="Wakamatsu A."/>
            <person name="Hayashi K."/>
            <person name="Sato H."/>
            <person name="Nagai K."/>
            <person name="Kimura K."/>
            <person name="Makita H."/>
            <person name="Sekine M."/>
            <person name="Obayashi M."/>
            <person name="Nishi T."/>
            <person name="Shibahara T."/>
            <person name="Tanaka T."/>
            <person name="Ishii S."/>
            <person name="Yamamoto J."/>
            <person name="Saito K."/>
            <person name="Kawai Y."/>
            <person name="Isono Y."/>
            <person name="Nakamura Y."/>
            <person name="Nagahari K."/>
            <person name="Murakami K."/>
            <person name="Yasuda T."/>
            <person name="Iwayanagi T."/>
            <person name="Wagatsuma M."/>
            <person name="Shiratori A."/>
            <person name="Sudo H."/>
            <person name="Hosoiri T."/>
            <person name="Kaku Y."/>
            <person name="Kodaira H."/>
            <person name="Kondo H."/>
            <person name="Sugawara M."/>
            <person name="Takahashi M."/>
            <person name="Kanda K."/>
            <person name="Yokoi T."/>
            <person name="Furuya T."/>
            <person name="Kikkawa E."/>
            <person name="Omura Y."/>
            <person name="Abe K."/>
            <person name="Kamihara K."/>
            <person name="Katsuta N."/>
            <person name="Sato K."/>
            <person name="Tanikawa M."/>
            <person name="Yamazaki M."/>
            <person name="Ninomiya K."/>
            <person name="Ishibashi T."/>
            <person name="Yamashita H."/>
            <person name="Murakawa K."/>
            <person name="Fujimori K."/>
            <person name="Tanai H."/>
            <person name="Kimata M."/>
            <person name="Watanabe M."/>
            <person name="Hiraoka S."/>
            <person name="Chiba Y."/>
            <person name="Ishida S."/>
            <person name="Ono Y."/>
            <person name="Takiguchi S."/>
            <person name="Watanabe S."/>
            <person name="Yosida M."/>
            <person name="Hotuta T."/>
            <person name="Kusano J."/>
            <person name="Kanehori K."/>
            <person name="Takahashi-Fujii A."/>
            <person name="Hara H."/>
            <person name="Tanase T.-O."/>
            <person name="Nomura Y."/>
            <person name="Togiya S."/>
            <person name="Komai F."/>
            <person name="Hara R."/>
            <person name="Takeuchi K."/>
            <person name="Arita M."/>
            <person name="Imose N."/>
            <person name="Musashino K."/>
            <person name="Yuuki H."/>
            <person name="Oshima A."/>
            <person name="Sasaki N."/>
            <person name="Aotsuka S."/>
            <person name="Yoshikawa Y."/>
            <person name="Matsunawa H."/>
            <person name="Ichihara T."/>
            <person name="Shiohata N."/>
            <person name="Sano S."/>
            <person name="Moriya S."/>
            <person name="Momiyama H."/>
            <person name="Satoh N."/>
            <person name="Takami S."/>
            <person name="Terashima Y."/>
            <person name="Suzuki O."/>
            <person name="Nakagawa S."/>
            <person name="Senoh A."/>
            <person name="Mizoguchi H."/>
            <person name="Goto Y."/>
            <person name="Shimizu F."/>
            <person name="Wakebe H."/>
            <person name="Hishigaki H."/>
            <person name="Watanabe T."/>
            <person name="Sugiyama A."/>
            <person name="Takemoto M."/>
            <person name="Kawakami B."/>
            <person name="Yamazaki M."/>
            <person name="Watanabe K."/>
            <person name="Kumagai A."/>
            <person name="Itakura S."/>
            <person name="Fukuzumi Y."/>
            <person name="Fujimori Y."/>
            <person name="Komiyama M."/>
            <person name="Tashiro H."/>
            <person name="Tanigami A."/>
            <person name="Fujiwara T."/>
            <person name="Ono T."/>
            <person name="Yamada K."/>
            <person name="Fujii Y."/>
            <person name="Ozaki K."/>
            <person name="Hirao M."/>
            <person name="Ohmori Y."/>
            <person name="Kawabata A."/>
            <person name="Hikiji T."/>
            <person name="Kobatake N."/>
            <person name="Inagaki H."/>
            <person name="Ikema Y."/>
            <person name="Okamoto S."/>
            <person name="Okitani R."/>
            <person name="Kawakami T."/>
            <person name="Noguchi S."/>
            <person name="Itoh T."/>
            <person name="Shigeta K."/>
            <person name="Senba T."/>
            <person name="Matsumura K."/>
            <person name="Nakajima Y."/>
            <person name="Mizuno T."/>
            <person name="Morinaga M."/>
            <person name="Sasaki M."/>
            <person name="Togashi T."/>
            <person name="Oyama M."/>
            <person name="Hata H."/>
            <person name="Watanabe M."/>
            <person name="Komatsu T."/>
            <person name="Mizushima-Sugano J."/>
            <person name="Satoh T."/>
            <person name="Shirai Y."/>
            <person name="Takahashi Y."/>
            <person name="Nakagawa K."/>
            <person name="Okumura K."/>
            <person name="Nagase T."/>
            <person name="Nomura N."/>
            <person name="Kikuchi H."/>
            <person name="Masuho Y."/>
            <person name="Yamashita R."/>
            <person name="Nakai K."/>
            <person name="Yada T."/>
            <person name="Nakamura Y."/>
            <person name="Ohara O."/>
            <person name="Isogai T."/>
            <person name="Sugano S."/>
        </authorList>
    </citation>
    <scope>NUCLEOTIDE SEQUENCE [LARGE SCALE MRNA] (ISOFORM 2)</scope>
    <scope>NUCLEOTIDE SEQUENCE [LARGE SCALE MRNA] OF 310-613 (ISOFORM 1)</scope>
    <source>
        <tissue>Small intestine</tissue>
        <tissue>Tongue</tissue>
    </source>
</reference>
<reference key="4">
    <citation type="journal article" date="2003" name="Nature">
        <title>The DNA sequence and analysis of human chromosome 6.</title>
        <authorList>
            <person name="Mungall A.J."/>
            <person name="Palmer S.A."/>
            <person name="Sims S.K."/>
            <person name="Edwards C.A."/>
            <person name="Ashurst J.L."/>
            <person name="Wilming L."/>
            <person name="Jones M.C."/>
            <person name="Horton R."/>
            <person name="Hunt S.E."/>
            <person name="Scott C.E."/>
            <person name="Gilbert J.G.R."/>
            <person name="Clamp M.E."/>
            <person name="Bethel G."/>
            <person name="Milne S."/>
            <person name="Ainscough R."/>
            <person name="Almeida J.P."/>
            <person name="Ambrose K.D."/>
            <person name="Andrews T.D."/>
            <person name="Ashwell R.I.S."/>
            <person name="Babbage A.K."/>
            <person name="Bagguley C.L."/>
            <person name="Bailey J."/>
            <person name="Banerjee R."/>
            <person name="Barker D.J."/>
            <person name="Barlow K.F."/>
            <person name="Bates K."/>
            <person name="Beare D.M."/>
            <person name="Beasley H."/>
            <person name="Beasley O."/>
            <person name="Bird C.P."/>
            <person name="Blakey S.E."/>
            <person name="Bray-Allen S."/>
            <person name="Brook J."/>
            <person name="Brown A.J."/>
            <person name="Brown J.Y."/>
            <person name="Burford D.C."/>
            <person name="Burrill W."/>
            <person name="Burton J."/>
            <person name="Carder C."/>
            <person name="Carter N.P."/>
            <person name="Chapman J.C."/>
            <person name="Clark S.Y."/>
            <person name="Clark G."/>
            <person name="Clee C.M."/>
            <person name="Clegg S."/>
            <person name="Cobley V."/>
            <person name="Collier R.E."/>
            <person name="Collins J.E."/>
            <person name="Colman L.K."/>
            <person name="Corby N.R."/>
            <person name="Coville G.J."/>
            <person name="Culley K.M."/>
            <person name="Dhami P."/>
            <person name="Davies J."/>
            <person name="Dunn M."/>
            <person name="Earthrowl M.E."/>
            <person name="Ellington A.E."/>
            <person name="Evans K.A."/>
            <person name="Faulkner L."/>
            <person name="Francis M.D."/>
            <person name="Frankish A."/>
            <person name="Frankland J."/>
            <person name="French L."/>
            <person name="Garner P."/>
            <person name="Garnett J."/>
            <person name="Ghori M.J."/>
            <person name="Gilby L.M."/>
            <person name="Gillson C.J."/>
            <person name="Glithero R.J."/>
            <person name="Grafham D.V."/>
            <person name="Grant M."/>
            <person name="Gribble S."/>
            <person name="Griffiths C."/>
            <person name="Griffiths M.N.D."/>
            <person name="Hall R."/>
            <person name="Halls K.S."/>
            <person name="Hammond S."/>
            <person name="Harley J.L."/>
            <person name="Hart E.A."/>
            <person name="Heath P.D."/>
            <person name="Heathcott R."/>
            <person name="Holmes S.J."/>
            <person name="Howden P.J."/>
            <person name="Howe K.L."/>
            <person name="Howell G.R."/>
            <person name="Huckle E."/>
            <person name="Humphray S.J."/>
            <person name="Humphries M.D."/>
            <person name="Hunt A.R."/>
            <person name="Johnson C.M."/>
            <person name="Joy A.A."/>
            <person name="Kay M."/>
            <person name="Keenan S.J."/>
            <person name="Kimberley A.M."/>
            <person name="King A."/>
            <person name="Laird G.K."/>
            <person name="Langford C."/>
            <person name="Lawlor S."/>
            <person name="Leongamornlert D.A."/>
            <person name="Leversha M."/>
            <person name="Lloyd C.R."/>
            <person name="Lloyd D.M."/>
            <person name="Loveland J.E."/>
            <person name="Lovell J."/>
            <person name="Martin S."/>
            <person name="Mashreghi-Mohammadi M."/>
            <person name="Maslen G.L."/>
            <person name="Matthews L."/>
            <person name="McCann O.T."/>
            <person name="McLaren S.J."/>
            <person name="McLay K."/>
            <person name="McMurray A."/>
            <person name="Moore M.J.F."/>
            <person name="Mullikin J.C."/>
            <person name="Niblett D."/>
            <person name="Nickerson T."/>
            <person name="Novik K.L."/>
            <person name="Oliver K."/>
            <person name="Overton-Larty E.K."/>
            <person name="Parker A."/>
            <person name="Patel R."/>
            <person name="Pearce A.V."/>
            <person name="Peck A.I."/>
            <person name="Phillimore B.J.C.T."/>
            <person name="Phillips S."/>
            <person name="Plumb R.W."/>
            <person name="Porter K.M."/>
            <person name="Ramsey Y."/>
            <person name="Ranby S.A."/>
            <person name="Rice C.M."/>
            <person name="Ross M.T."/>
            <person name="Searle S.M."/>
            <person name="Sehra H.K."/>
            <person name="Sheridan E."/>
            <person name="Skuce C.D."/>
            <person name="Smith S."/>
            <person name="Smith M."/>
            <person name="Spraggon L."/>
            <person name="Squares S.L."/>
            <person name="Steward C.A."/>
            <person name="Sycamore N."/>
            <person name="Tamlyn-Hall G."/>
            <person name="Tester J."/>
            <person name="Theaker A.J."/>
            <person name="Thomas D.W."/>
            <person name="Thorpe A."/>
            <person name="Tracey A."/>
            <person name="Tromans A."/>
            <person name="Tubby B."/>
            <person name="Wall M."/>
            <person name="Wallis J.M."/>
            <person name="West A.P."/>
            <person name="White S.S."/>
            <person name="Whitehead S.L."/>
            <person name="Whittaker H."/>
            <person name="Wild A."/>
            <person name="Willey D.J."/>
            <person name="Wilmer T.E."/>
            <person name="Wood J.M."/>
            <person name="Wray P.W."/>
            <person name="Wyatt J.C."/>
            <person name="Young L."/>
            <person name="Younger R.M."/>
            <person name="Bentley D.R."/>
            <person name="Coulson A."/>
            <person name="Durbin R.M."/>
            <person name="Hubbard T."/>
            <person name="Sulston J.E."/>
            <person name="Dunham I."/>
            <person name="Rogers J."/>
            <person name="Beck S."/>
        </authorList>
    </citation>
    <scope>NUCLEOTIDE SEQUENCE [LARGE SCALE GENOMIC DNA]</scope>
</reference>
<reference key="5">
    <citation type="submission" date="2005-07" db="EMBL/GenBank/DDBJ databases">
        <authorList>
            <person name="Mural R.J."/>
            <person name="Istrail S."/>
            <person name="Sutton G.G."/>
            <person name="Florea L."/>
            <person name="Halpern A.L."/>
            <person name="Mobarry C.M."/>
            <person name="Lippert R."/>
            <person name="Walenz B."/>
            <person name="Shatkay H."/>
            <person name="Dew I."/>
            <person name="Miller J.R."/>
            <person name="Flanigan M.J."/>
            <person name="Edwards N.J."/>
            <person name="Bolanos R."/>
            <person name="Fasulo D."/>
            <person name="Halldorsson B.V."/>
            <person name="Hannenhalli S."/>
            <person name="Turner R."/>
            <person name="Yooseph S."/>
            <person name="Lu F."/>
            <person name="Nusskern D.R."/>
            <person name="Shue B.C."/>
            <person name="Zheng X.H."/>
            <person name="Zhong F."/>
            <person name="Delcher A.L."/>
            <person name="Huson D.H."/>
            <person name="Kravitz S.A."/>
            <person name="Mouchard L."/>
            <person name="Reinert K."/>
            <person name="Remington K.A."/>
            <person name="Clark A.G."/>
            <person name="Waterman M.S."/>
            <person name="Eichler E.E."/>
            <person name="Adams M.D."/>
            <person name="Hunkapiller M.W."/>
            <person name="Myers E.W."/>
            <person name="Venter J.C."/>
        </authorList>
    </citation>
    <scope>NUCLEOTIDE SEQUENCE [LARGE SCALE GENOMIC DNA]</scope>
</reference>
<reference key="6">
    <citation type="journal article" date="2004" name="Genome Res.">
        <title>The status, quality, and expansion of the NIH full-length cDNA project: the Mammalian Gene Collection (MGC).</title>
        <authorList>
            <consortium name="The MGC Project Team"/>
        </authorList>
    </citation>
    <scope>NUCLEOTIDE SEQUENCE [LARGE SCALE MRNA] (ISOFORM 2)</scope>
    <source>
        <tissue>Lung</tissue>
    </source>
</reference>
<reference key="7">
    <citation type="journal article" date="2002" name="FEBS Lett.">
        <title>Novel human G protein-coupled receptors with long N-terminals containing GPS domains and Ser/Thr-rich regions.</title>
        <authorList>
            <person name="Fredriksson R."/>
            <person name="Lagerstroem M.C."/>
            <person name="Hoeglund P.J."/>
            <person name="Schioeth H.B."/>
        </authorList>
    </citation>
    <scope>NUCLEOTIDE SEQUENCE [MRNA] OF 198-910 (ISOFORM 1)</scope>
</reference>
<reference key="8">
    <citation type="journal article" date="2003" name="Proc. Natl. Acad. Sci. U.S.A.">
        <title>The G protein-coupled receptor repertoires of human and mouse.</title>
        <authorList>
            <person name="Vassilatis D.K."/>
            <person name="Hohmann J.G."/>
            <person name="Zeng H."/>
            <person name="Li F."/>
            <person name="Ranchalis J.E."/>
            <person name="Mortrud M.T."/>
            <person name="Brown A."/>
            <person name="Rodriguez S.S."/>
            <person name="Weller J.R."/>
            <person name="Wright A.C."/>
            <person name="Bergmann J.E."/>
            <person name="Gaitanaris G.A."/>
        </authorList>
    </citation>
    <scope>NUCLEOTIDE SEQUENCE [LARGE SCALE MRNA] OF 460-636 (ISOFORM 1)</scope>
</reference>
<reference key="9">
    <citation type="journal article" date="2010" name="BMC Cancer">
        <title>Orphan receptor GPR110, an oncogene overexpressed in lung and prostate cancer.</title>
        <authorList>
            <person name="Lum A.M."/>
            <person name="Wang B.B."/>
            <person name="Beck-Engeser G.B."/>
            <person name="Li L."/>
            <person name="Channa N."/>
            <person name="Wabl M."/>
        </authorList>
    </citation>
    <scope>TISSUE SPECIFICITY</scope>
    <scope>SUBCELLULAR LOCATION</scope>
    <scope>GLYCOSYLATION</scope>
</reference>
<reference key="10">
    <citation type="journal article" date="2015" name="Pharmacol. Rev.">
        <title>International union of basic and clinical pharmacology. XCIV. Adhesion G protein-coupled receptors.</title>
        <authorList>
            <person name="Hamann J."/>
            <person name="Aust G."/>
            <person name="Arac D."/>
            <person name="Engel F.B."/>
            <person name="Formstone C."/>
            <person name="Fredriksson R."/>
            <person name="Hall R.A."/>
            <person name="Harty B.L."/>
            <person name="Kirchhoff C."/>
            <person name="Knapp B."/>
            <person name="Krishnan A."/>
            <person name="Liebscher I."/>
            <person name="Lin H.H."/>
            <person name="Martinelli D.C."/>
            <person name="Monk K.R."/>
            <person name="Peeters M.C."/>
            <person name="Piao X."/>
            <person name="Promel S."/>
            <person name="Schoneberg T."/>
            <person name="Schwartz T.W."/>
            <person name="Singer K."/>
            <person name="Stacey M."/>
            <person name="Ushkaryov Y.A."/>
            <person name="Vallon M."/>
            <person name="Wolfrum U."/>
            <person name="Wright M.W."/>
            <person name="Xu L."/>
            <person name="Langenhan T."/>
            <person name="Schioth H.B."/>
        </authorList>
    </citation>
    <scope>NOMENCLATURE</scope>
</reference>
<reference key="11">
    <citation type="journal article" date="2016" name="Nat. Commun.">
        <title>Orphan GPR110 (ADGRF1) targeted by N-docosahexaenoylethanolamine in development of neurons and cognitive function.</title>
        <authorList>
            <person name="Lee J.W."/>
            <person name="Huang B.X."/>
            <person name="Kwon H."/>
            <person name="Rashid M.A."/>
            <person name="Kharebava G."/>
            <person name="Desai A."/>
            <person name="Patnaik S."/>
            <person name="Marugan J."/>
            <person name="Kim H.Y."/>
        </authorList>
    </citation>
    <scope>FUNCTION</scope>
    <scope>SUBCELLULAR LOCATION</scope>
    <scope>MUTAGENESIS OF 565-HIS--THR-567</scope>
</reference>
<reference key="12">
    <citation type="journal article" date="2020" name="Commun. Biol.">
        <title>Synaptamide activates the adhesion GPCR GPR110 (ADGRF1) through GAIN domain binding.</title>
        <authorList>
            <person name="Huang B.X."/>
            <person name="Hu X."/>
            <person name="Kwon H.S."/>
            <person name="Fu C."/>
            <person name="Lee J.W."/>
            <person name="Southall N."/>
            <person name="Marugan J."/>
            <person name="Kim H.Y."/>
        </authorList>
    </citation>
    <scope>FUNCTION</scope>
</reference>
<reference evidence="23 24 25 26 27" key="13">
    <citation type="journal article" date="2022" name="Nat. Commun.">
        <title>Structural basis of adhesion GPCR GPR110 activation by stalk peptide and G-proteins coupling.</title>
        <authorList>
            <person name="Zhu X."/>
            <person name="Qian Y."/>
            <person name="Li X."/>
            <person name="Xu Z."/>
            <person name="Xia R."/>
            <person name="Wang N."/>
            <person name="Liang J."/>
            <person name="Yin H."/>
            <person name="Zhang A."/>
            <person name="Guo C."/>
            <person name="Wang G."/>
            <person name="He Y."/>
        </authorList>
    </citation>
    <scope>STRUCTURE BY ELECTRON MICROSCOPY (2.83 ANGSTROMS)</scope>
    <scope>FUNCTION</scope>
    <scope>DISULFIDE BONDS</scope>
    <scope>MUTAGENESIS OF PHE-569; SER-570; LEU-572; MET-573; THR-589; ILE-630; MET-675; ARG-729; LEU-799; LEU-800; HIS-820 AND ILE-834</scope>
</reference>
<reference evidence="20 21 22" key="14">
    <citation type="journal article" date="2022" name="Nature">
        <title>Structural basis of tethered agonism of the adhesion GPCRs ADGRD1 and ADGRF1.</title>
        <authorList>
            <person name="Qu X."/>
            <person name="Qiu N."/>
            <person name="Wang M."/>
            <person name="Zhang B."/>
            <person name="Du J."/>
            <person name="Zhong Z."/>
            <person name="Xu W."/>
            <person name="Chu X."/>
            <person name="Ma L."/>
            <person name="Yi C."/>
            <person name="Han S."/>
            <person name="Shui W."/>
            <person name="Zhao Q."/>
            <person name="Wu B."/>
        </authorList>
    </citation>
    <scope>STRUCTURE BY ELECTRON MICROSCOPY (3.00 ANGSTROMS) OF 251-860 IN COMPLEX WITH GNAS; GNB1 AND GNG2</scope>
    <scope>FUNCTION</scope>
    <scope>ACTIVITY REGULATION</scope>
    <scope>DOMAIN</scope>
    <scope>DISULFIDE BOND</scope>
    <scope>MUTAGENESIS OF PHE-569; LEU-572; MET-573; MET-627; PHE-672; MET-675; LEU-678; LEU-681; LEU-682; ALA-683; VAL-755; VAL-761; LEU-764; VAL-765; PRO-798; LEU-799; LEU-800; GLY-801; TRP-804; GLN-830 AND GLY-831</scope>
</reference>
<reference evidence="29" key="15">
    <citation type="journal article" date="2023" name="J. Mol. Biol.">
        <title>Crystal Structure of the Extracellular Domains of GPR110.</title>
        <authorList>
            <person name="Wang F."/>
            <person name="Wang Y."/>
            <person name="Qiu W."/>
            <person name="Zhang Q."/>
            <person name="Yang H."/>
            <person name="Song G."/>
        </authorList>
    </citation>
    <scope>X-RAY CRYSTALLOGRAPHY (2.90 ANGSTROMS) OF 207-566; 150-206 AND 567-580</scope>
    <scope>GLYCOSYLATION AT ASN-168; ASN-282; ASN-310; ASN-329; ASN-354; ASN-368; ASN-389 AND ASN-455</scope>
    <scope>DISULFIDE BONDS</scope>
    <scope>MUTAGENESIS OF ASN-310 AND ASN-389</scope>
</reference>
<reference evidence="28" key="16">
    <citation type="journal article" date="2023" name="Nat. Commun.">
        <title>Tethered agonist activated ADGRF1 structure and signalling analysis reveal basis for G protein coupling.</title>
        <authorList>
            <person name="Jones D.T.D."/>
            <person name="Dates A.N."/>
            <person name="Rawson S.D."/>
            <person name="Burruss M.M."/>
            <person name="Lipper C.H."/>
            <person name="Blacklow S.C."/>
        </authorList>
    </citation>
    <scope>STRUCTURE BY ELECTRON MICROSCOPY (3.44 ANGSTROMS) OF 567-910</scope>
    <scope>FUNCTION</scope>
    <scope>DISULFIDE BONDS</scope>
    <scope>MUTAGENESIS OF PHE-569; LEU-572 AND MET-573</scope>
</reference>